<accession>O83389</accession>
<protein>
    <recommendedName>
        <fullName>Uncharacterized protein TP_0374</fullName>
    </recommendedName>
</protein>
<proteinExistence type="predicted"/>
<dbReference type="EMBL" id="AE000520">
    <property type="protein sequence ID" value="AAC65362.1"/>
    <property type="molecule type" value="Genomic_DNA"/>
</dbReference>
<dbReference type="PIR" id="E71333">
    <property type="entry name" value="E71333"/>
</dbReference>
<dbReference type="SMR" id="O83389"/>
<dbReference type="IntAct" id="O83389">
    <property type="interactions" value="7"/>
</dbReference>
<dbReference type="STRING" id="243276.TP_0374"/>
<dbReference type="EnsemblBacteria" id="AAC65362">
    <property type="protein sequence ID" value="AAC65362"/>
    <property type="gene ID" value="TP_0374"/>
</dbReference>
<dbReference type="KEGG" id="tpa:TP_0374"/>
<dbReference type="KEGG" id="tpw:TPANIC_0374"/>
<dbReference type="eggNOG" id="COG0457">
    <property type="taxonomic scope" value="Bacteria"/>
</dbReference>
<dbReference type="HOGENOM" id="CLU_392278_0_0_12"/>
<dbReference type="OrthoDB" id="366290at2"/>
<dbReference type="Proteomes" id="UP000000811">
    <property type="component" value="Chromosome"/>
</dbReference>
<dbReference type="Gene3D" id="1.25.40.10">
    <property type="entry name" value="Tetratricopeptide repeat domain"/>
    <property type="match status" value="1"/>
</dbReference>
<dbReference type="InterPro" id="IPR011990">
    <property type="entry name" value="TPR-like_helical_dom_sf"/>
</dbReference>
<dbReference type="SUPFAM" id="SSF48452">
    <property type="entry name" value="TPR-like"/>
    <property type="match status" value="1"/>
</dbReference>
<feature type="chain" id="PRO_0000202244" description="Uncharacterized protein TP_0374">
    <location>
        <begin position="1"/>
        <end position="791"/>
    </location>
</feature>
<feature type="region of interest" description="Disordered" evidence="1">
    <location>
        <begin position="267"/>
        <end position="288"/>
    </location>
</feature>
<feature type="compositionally biased region" description="Polar residues" evidence="1">
    <location>
        <begin position="271"/>
        <end position="283"/>
    </location>
</feature>
<keyword id="KW-1185">Reference proteome</keyword>
<name>Y374_TREPA</name>
<sequence length="791" mass="89452">MRSMAQHLVTKIVTRRGLLMSKGMCPRMGRLCAVSIFCAFSGIQDASCVSEPAPPQDLERNHPGVAARYLQEGRWQEALSQAEQGVASAPQIADFLFIAARASYALQQPRARALQWMARAVAKDMQWCVYDIEEVRLFYARLCVDTLQHARALELLATAEQVSADADWLRARARYGLGQVEHAQELIEKALERWALDARFAKLFFAQERSRRPSSRSKKIADSILSRLSVWQEQDPSLLVEAALFEPRTNMAFRYLQTYFTLRPLDAPGESSAQSSYEQSTRAGDSAPEQELYARAQSIVLGLQYGVLDEQRAMEMFCTLNSPLAVPAVDPTDDVSSFGVHASSVSSSTPLQRVVVLYADLLHEFSRLLASRPIRARFARFLAEFEGVLYTDENRDGIVSARVFFKAGRPSRAQFDTNQDGILEYEVYANDGAPTCVHTMHSTQKTELSRASVFPIPQNIAAHDHERAAERWIAPRVSLPADNGVEGETQARVPLTQQGYRVCYDRYPEVHQVGWEDKTYVLRPRALRWQPVRMQSLDLARDLEGVRSHDFFTMVLTNEPLPTEQQITVSSLYYEKPDSLFERARVRTYLDEGLPLFSETHVGSRFRARTHYVDGRATRRDSDRDDDGFFETREYYNAQGAVRALSVDVHKDRSFAYQEEYGAKGQKVQKWYGRGRVTISHTELPTGHARTEWLHPVTGRHVTVDFVQGVPKRLLVDGEVHALTKDPRNAALYWVRRIPRNGDEVGQRIVESFRAATSPVVSEYFRTGGSVVRAVRSGGVVFAEELEPGKE</sequence>
<gene>
    <name type="ordered locus">TP_0374</name>
</gene>
<evidence type="ECO:0000256" key="1">
    <source>
        <dbReference type="SAM" id="MobiDB-lite"/>
    </source>
</evidence>
<reference key="1">
    <citation type="journal article" date="1998" name="Science">
        <title>Complete genome sequence of Treponema pallidum, the syphilis spirochete.</title>
        <authorList>
            <person name="Fraser C.M."/>
            <person name="Norris S.J."/>
            <person name="Weinstock G.M."/>
            <person name="White O."/>
            <person name="Sutton G.G."/>
            <person name="Dodson R.J."/>
            <person name="Gwinn M.L."/>
            <person name="Hickey E.K."/>
            <person name="Clayton R.A."/>
            <person name="Ketchum K.A."/>
            <person name="Sodergren E."/>
            <person name="Hardham J.M."/>
            <person name="McLeod M.P."/>
            <person name="Salzberg S.L."/>
            <person name="Peterson J.D."/>
            <person name="Khalak H.G."/>
            <person name="Richardson D.L."/>
            <person name="Howell J.K."/>
            <person name="Chidambaram M."/>
            <person name="Utterback T.R."/>
            <person name="McDonald L.A."/>
            <person name="Artiach P."/>
            <person name="Bowman C."/>
            <person name="Cotton M.D."/>
            <person name="Fujii C."/>
            <person name="Garland S.A."/>
            <person name="Hatch B."/>
            <person name="Horst K."/>
            <person name="Roberts K.M."/>
            <person name="Sandusky M."/>
            <person name="Weidman J.F."/>
            <person name="Smith H.O."/>
            <person name="Venter J.C."/>
        </authorList>
    </citation>
    <scope>NUCLEOTIDE SEQUENCE [LARGE SCALE GENOMIC DNA]</scope>
    <source>
        <strain>Nichols</strain>
    </source>
</reference>
<organism>
    <name type="scientific">Treponema pallidum (strain Nichols)</name>
    <dbReference type="NCBI Taxonomy" id="243276"/>
    <lineage>
        <taxon>Bacteria</taxon>
        <taxon>Pseudomonadati</taxon>
        <taxon>Spirochaetota</taxon>
        <taxon>Spirochaetia</taxon>
        <taxon>Spirochaetales</taxon>
        <taxon>Treponemataceae</taxon>
        <taxon>Treponema</taxon>
    </lineage>
</organism>